<keyword id="KW-0240">DNA-directed RNA polymerase</keyword>
<keyword id="KW-0244">Early protein</keyword>
<keyword id="KW-0548">Nucleotidyltransferase</keyword>
<keyword id="KW-1185">Reference proteome</keyword>
<keyword id="KW-0804">Transcription</keyword>
<keyword id="KW-0808">Transferase</keyword>
<keyword id="KW-0946">Virion</keyword>
<organism>
    <name type="scientific">Molluscum contagiosum virus subtype 1</name>
    <name type="common">MOCV</name>
    <name type="synonym">MCVI</name>
    <dbReference type="NCBI Taxonomy" id="10280"/>
    <lineage>
        <taxon>Viruses</taxon>
        <taxon>Varidnaviria</taxon>
        <taxon>Bamfordvirae</taxon>
        <taxon>Nucleocytoviricota</taxon>
        <taxon>Pokkesviricetes</taxon>
        <taxon>Chitovirales</taxon>
        <taxon>Poxviridae</taxon>
        <taxon>Chordopoxvirinae</taxon>
        <taxon>Molluscipoxvirus</taxon>
        <taxon>Molluscum contagiosum virus</taxon>
    </lineage>
</organism>
<reference key="1">
    <citation type="journal article" date="1996" name="Science">
        <title>Genome sequence of a human tumorigenic poxvirus: prediction of specific host response-evasion genes.</title>
        <authorList>
            <person name="Senkevich T.G."/>
            <person name="Bugert J.J."/>
            <person name="Sisler J.R."/>
            <person name="Koonin E.V."/>
            <person name="Darai G."/>
            <person name="Moss B."/>
        </authorList>
    </citation>
    <scope>NUCLEOTIDE SEQUENCE [LARGE SCALE GENOMIC DNA]</scope>
</reference>
<reference key="2">
    <citation type="submission" date="1997-05" db="EMBL/GenBank/DDBJ databases">
        <title>A random DNA sequencing, computer-based approach for the generation of a gene map of Molluscum contagiosum virus.</title>
        <authorList>
            <person name="Moratilla M."/>
            <person name="Agromayor M."/>
            <person name="Nunez A."/>
            <person name="Funes J.M."/>
            <person name="Varas A.J."/>
            <person name="Lopez-Estebaranz J.L."/>
            <person name="Esteban M."/>
            <person name="Martin-Gallardo A."/>
        </authorList>
    </citation>
    <scope>NUCLEOTIDE SEQUENCE [GENOMIC DNA]</scope>
</reference>
<dbReference type="EC" id="2.7.7.6"/>
<dbReference type="EMBL" id="U60315">
    <property type="protein sequence ID" value="AAC55189.1"/>
    <property type="molecule type" value="Genomic_DNA"/>
</dbReference>
<dbReference type="EMBL" id="U86912">
    <property type="protein sequence ID" value="AAB57965.1"/>
    <property type="molecule type" value="Genomic_DNA"/>
</dbReference>
<dbReference type="PIR" id="T30663">
    <property type="entry name" value="T30663"/>
</dbReference>
<dbReference type="RefSeq" id="NP_044012.1">
    <property type="nucleotide sequence ID" value="NC_001731.1"/>
</dbReference>
<dbReference type="SMR" id="Q98229"/>
<dbReference type="GeneID" id="1487080"/>
<dbReference type="KEGG" id="vg:1487080"/>
<dbReference type="OrthoDB" id="24500at10239"/>
<dbReference type="Proteomes" id="UP000000869">
    <property type="component" value="Genome"/>
</dbReference>
<dbReference type="GO" id="GO:0000428">
    <property type="term" value="C:DNA-directed RNA polymerase complex"/>
    <property type="evidence" value="ECO:0007669"/>
    <property type="project" value="UniProtKB-KW"/>
</dbReference>
<dbReference type="GO" id="GO:0044423">
    <property type="term" value="C:virion component"/>
    <property type="evidence" value="ECO:0007669"/>
    <property type="project" value="UniProtKB-KW"/>
</dbReference>
<dbReference type="GO" id="GO:0003677">
    <property type="term" value="F:DNA binding"/>
    <property type="evidence" value="ECO:0007669"/>
    <property type="project" value="InterPro"/>
</dbReference>
<dbReference type="GO" id="GO:0003899">
    <property type="term" value="F:DNA-directed RNA polymerase activity"/>
    <property type="evidence" value="ECO:0007669"/>
    <property type="project" value="UniProtKB-EC"/>
</dbReference>
<dbReference type="GO" id="GO:0006351">
    <property type="term" value="P:DNA-templated transcription"/>
    <property type="evidence" value="ECO:0007669"/>
    <property type="project" value="InterPro"/>
</dbReference>
<dbReference type="InterPro" id="IPR008448">
    <property type="entry name" value="RNA_pol_7kDa_chordopoxvir"/>
</dbReference>
<dbReference type="Pfam" id="PF05864">
    <property type="entry name" value="Chordopox_RPO7"/>
    <property type="match status" value="1"/>
</dbReference>
<comment type="function">
    <text evidence="1">Part of the DNA-dependent RNA polymerase which catalyzes the transcription of viral DNA into RNA using the four ribonucleoside triphosphates as substrates. Responsible for the transcription of early, intermediate and late genes. DNA-dependent RNA polymerase associates with the early transcription factor (ETF) thereby allowing the early genes transcription. Late transcription, and probably also intermediate transcription, require newly synthesized RNA polymerase (By similarity).</text>
</comment>
<comment type="catalytic activity">
    <reaction>
        <text>RNA(n) + a ribonucleoside 5'-triphosphate = RNA(n+1) + diphosphate</text>
        <dbReference type="Rhea" id="RHEA:21248"/>
        <dbReference type="Rhea" id="RHEA-COMP:14527"/>
        <dbReference type="Rhea" id="RHEA-COMP:17342"/>
        <dbReference type="ChEBI" id="CHEBI:33019"/>
        <dbReference type="ChEBI" id="CHEBI:61557"/>
        <dbReference type="ChEBI" id="CHEBI:140395"/>
        <dbReference type="EC" id="2.7.7.6"/>
    </reaction>
</comment>
<comment type="subunit">
    <text evidence="1">The DNA-dependent RNA polymerase used for intermediate and late genes expression consists of eight subunits 147 kDa, 133 kDa, 35 kDa, 30 kDa, 22 kDa, 19 kDa, 18 kDa and 7 kDa totalling more than 500 kDa in mass. The same holoenzyme, with the addition of the transcription-specificity factor RAP94, is used for early gene expression (By similarity).</text>
</comment>
<comment type="subcellular location">
    <subcellularLocation>
        <location evidence="2">Virion</location>
    </subcellularLocation>
    <text evidence="1">All the enzymes and other proteins required to synthesize early mRNAs are packaged within the virion core along with the DNA genome. This is necessary because viral early mRNAs are synthesized within minutes after virus entry into the cell and are extruded through pores in the core particle (By similarity).</text>
</comment>
<comment type="induction">
    <text>Expressed in the early phase of the viral replicative cycle.</text>
</comment>
<comment type="similarity">
    <text evidence="2">Belongs to the poxviridae DNA-directed RNA polymerase 7 kDa subunit family.</text>
</comment>
<feature type="chain" id="PRO_0000099161" description="DNA-directed RNA polymerase 7 kDa subunit">
    <location>
        <begin position="1"/>
        <end position="63"/>
    </location>
</feature>
<gene>
    <name type="primary">RPO7</name>
    <name type="ordered locus">MC061R</name>
    <name type="ORF">B1-85.2</name>
</gene>
<proteinExistence type="evidence at transcript level"/>
<accession>Q98229</accession>
<accession>O12606</accession>
<accession>O12887</accession>
<sequence>MVFALVCASCGRDLSEVRYRLLIERQKLSDVLRNLTHMCCRLKLATQIEPYRNLTVQPLLDIN</sequence>
<organismHost>
    <name type="scientific">Homo sapiens</name>
    <name type="common">Human</name>
    <dbReference type="NCBI Taxonomy" id="9606"/>
</organismHost>
<protein>
    <recommendedName>
        <fullName>DNA-directed RNA polymerase 7 kDa subunit</fullName>
        <ecNumber>2.7.7.6</ecNumber>
    </recommendedName>
</protein>
<name>RP07_MCV1</name>
<evidence type="ECO:0000250" key="1"/>
<evidence type="ECO:0000305" key="2"/>